<name>RIMM_CLONN</name>
<gene>
    <name evidence="1" type="primary">rimM</name>
    <name type="ordered locus">NT01CX_2210</name>
</gene>
<feature type="chain" id="PRO_0000351750" description="Ribosome maturation factor RimM">
    <location>
        <begin position="1"/>
        <end position="162"/>
    </location>
</feature>
<feature type="domain" description="PRC barrel" evidence="1">
    <location>
        <begin position="90"/>
        <end position="161"/>
    </location>
</feature>
<organism>
    <name type="scientific">Clostridium novyi (strain NT)</name>
    <dbReference type="NCBI Taxonomy" id="386415"/>
    <lineage>
        <taxon>Bacteria</taxon>
        <taxon>Bacillati</taxon>
        <taxon>Bacillota</taxon>
        <taxon>Clostridia</taxon>
        <taxon>Eubacteriales</taxon>
        <taxon>Clostridiaceae</taxon>
        <taxon>Clostridium</taxon>
    </lineage>
</organism>
<keyword id="KW-0143">Chaperone</keyword>
<keyword id="KW-0963">Cytoplasm</keyword>
<keyword id="KW-1185">Reference proteome</keyword>
<keyword id="KW-0690">Ribosome biogenesis</keyword>
<keyword id="KW-0698">rRNA processing</keyword>
<proteinExistence type="inferred from homology"/>
<dbReference type="EMBL" id="CP000382">
    <property type="protein sequence ID" value="ABK61205.1"/>
    <property type="molecule type" value="Genomic_DNA"/>
</dbReference>
<dbReference type="RefSeq" id="WP_011722283.1">
    <property type="nucleotide sequence ID" value="NC_008593.1"/>
</dbReference>
<dbReference type="SMR" id="A0Q0Y1"/>
<dbReference type="STRING" id="386415.NT01CX_2210"/>
<dbReference type="KEGG" id="cno:NT01CX_2210"/>
<dbReference type="eggNOG" id="COG0806">
    <property type="taxonomic scope" value="Bacteria"/>
</dbReference>
<dbReference type="HOGENOM" id="CLU_077636_3_2_9"/>
<dbReference type="Proteomes" id="UP000008220">
    <property type="component" value="Chromosome"/>
</dbReference>
<dbReference type="GO" id="GO:0005737">
    <property type="term" value="C:cytoplasm"/>
    <property type="evidence" value="ECO:0007669"/>
    <property type="project" value="UniProtKB-SubCell"/>
</dbReference>
<dbReference type="GO" id="GO:0005840">
    <property type="term" value="C:ribosome"/>
    <property type="evidence" value="ECO:0007669"/>
    <property type="project" value="InterPro"/>
</dbReference>
<dbReference type="GO" id="GO:0043022">
    <property type="term" value="F:ribosome binding"/>
    <property type="evidence" value="ECO:0007669"/>
    <property type="project" value="InterPro"/>
</dbReference>
<dbReference type="GO" id="GO:0042274">
    <property type="term" value="P:ribosomal small subunit biogenesis"/>
    <property type="evidence" value="ECO:0007669"/>
    <property type="project" value="UniProtKB-UniRule"/>
</dbReference>
<dbReference type="GO" id="GO:0006364">
    <property type="term" value="P:rRNA processing"/>
    <property type="evidence" value="ECO:0007669"/>
    <property type="project" value="UniProtKB-UniRule"/>
</dbReference>
<dbReference type="Gene3D" id="2.30.30.240">
    <property type="entry name" value="PRC-barrel domain"/>
    <property type="match status" value="1"/>
</dbReference>
<dbReference type="Gene3D" id="2.40.30.60">
    <property type="entry name" value="RimM"/>
    <property type="match status" value="1"/>
</dbReference>
<dbReference type="HAMAP" id="MF_00014">
    <property type="entry name" value="Ribosome_mat_RimM"/>
    <property type="match status" value="1"/>
</dbReference>
<dbReference type="InterPro" id="IPR011033">
    <property type="entry name" value="PRC_barrel-like_sf"/>
</dbReference>
<dbReference type="InterPro" id="IPR056792">
    <property type="entry name" value="PRC_RimM"/>
</dbReference>
<dbReference type="InterPro" id="IPR011961">
    <property type="entry name" value="RimM"/>
</dbReference>
<dbReference type="InterPro" id="IPR002676">
    <property type="entry name" value="RimM_N"/>
</dbReference>
<dbReference type="InterPro" id="IPR036976">
    <property type="entry name" value="RimM_N_sf"/>
</dbReference>
<dbReference type="InterPro" id="IPR009000">
    <property type="entry name" value="Transl_B-barrel_sf"/>
</dbReference>
<dbReference type="NCBIfam" id="TIGR02273">
    <property type="entry name" value="16S_RimM"/>
    <property type="match status" value="1"/>
</dbReference>
<dbReference type="PANTHER" id="PTHR33692">
    <property type="entry name" value="RIBOSOME MATURATION FACTOR RIMM"/>
    <property type="match status" value="1"/>
</dbReference>
<dbReference type="PANTHER" id="PTHR33692:SF1">
    <property type="entry name" value="RIBOSOME MATURATION FACTOR RIMM"/>
    <property type="match status" value="1"/>
</dbReference>
<dbReference type="Pfam" id="PF24986">
    <property type="entry name" value="PRC_RimM"/>
    <property type="match status" value="1"/>
</dbReference>
<dbReference type="Pfam" id="PF01782">
    <property type="entry name" value="RimM"/>
    <property type="match status" value="1"/>
</dbReference>
<dbReference type="SUPFAM" id="SSF50346">
    <property type="entry name" value="PRC-barrel domain"/>
    <property type="match status" value="1"/>
</dbReference>
<dbReference type="SUPFAM" id="SSF50447">
    <property type="entry name" value="Translation proteins"/>
    <property type="match status" value="1"/>
</dbReference>
<protein>
    <recommendedName>
        <fullName evidence="1">Ribosome maturation factor RimM</fullName>
    </recommendedName>
</protein>
<evidence type="ECO:0000255" key="1">
    <source>
        <dbReference type="HAMAP-Rule" id="MF_00014"/>
    </source>
</evidence>
<reference key="1">
    <citation type="journal article" date="2006" name="Nat. Biotechnol.">
        <title>The genome and transcriptomes of the anti-tumor agent Clostridium novyi-NT.</title>
        <authorList>
            <person name="Bettegowda C."/>
            <person name="Huang X."/>
            <person name="Lin J."/>
            <person name="Cheong I."/>
            <person name="Kohli M."/>
            <person name="Szabo S.A."/>
            <person name="Zhang X."/>
            <person name="Diaz L.A. Jr."/>
            <person name="Velculescu V.E."/>
            <person name="Parmigiani G."/>
            <person name="Kinzler K.W."/>
            <person name="Vogelstein B."/>
            <person name="Zhou S."/>
        </authorList>
    </citation>
    <scope>NUCLEOTIDE SEQUENCE [LARGE SCALE GENOMIC DNA]</scope>
    <source>
        <strain>NT</strain>
    </source>
</reference>
<accession>A0Q0Y1</accession>
<sequence length="162" mass="18336">MEQFLAVGKIINTHGIKGEIKVMPSTDNVERFKELNEAYIDGNIVEIEGCKFQPGKVILKIKGIDSIEDAQRLKNKYIKVSRENAATLDEDCYYEADIVGCTVYDENEKQLGNIDEIIHTGSNDVYWIKGPNELLIPAIKSVIVDIDVNNKKIIIKPLEVWQ</sequence>
<comment type="function">
    <text evidence="1">An accessory protein needed during the final step in the assembly of 30S ribosomal subunit, possibly for assembly of the head region. Essential for efficient processing of 16S rRNA. May be needed both before and after RbfA during the maturation of 16S rRNA. It has affinity for free ribosomal 30S subunits but not for 70S ribosomes.</text>
</comment>
<comment type="subunit">
    <text evidence="1">Binds ribosomal protein uS19.</text>
</comment>
<comment type="subcellular location">
    <subcellularLocation>
        <location evidence="1">Cytoplasm</location>
    </subcellularLocation>
</comment>
<comment type="domain">
    <text evidence="1">The PRC barrel domain binds ribosomal protein uS19.</text>
</comment>
<comment type="similarity">
    <text evidence="1">Belongs to the RimM family.</text>
</comment>